<gene>
    <name type="primary">MNS4</name>
    <name type="ordered locus">At5g43710</name>
    <name type="ORF">MQD19.4</name>
    <name type="ORF">MQO24.4</name>
</gene>
<feature type="chain" id="PRO_0000397936" description="Alpha-mannosidase I MNS4">
    <location>
        <begin position="1"/>
        <end position="624"/>
    </location>
</feature>
<feature type="topological domain" description="Cytoplasmic" evidence="5">
    <location>
        <begin position="1"/>
        <end position="7"/>
    </location>
</feature>
<feature type="transmembrane region" description="Helical; Signal-anchor for type II membrane protein" evidence="5">
    <location>
        <begin position="8"/>
        <end position="28"/>
    </location>
</feature>
<feature type="topological domain" description="Lumenal" evidence="5">
    <location>
        <begin position="29"/>
        <end position="624"/>
    </location>
</feature>
<feature type="region of interest" description="Disordered" evidence="6">
    <location>
        <begin position="574"/>
        <end position="624"/>
    </location>
</feature>
<feature type="compositionally biased region" description="Polar residues" evidence="6">
    <location>
        <begin position="586"/>
        <end position="608"/>
    </location>
</feature>
<feature type="active site" description="Proton donor" evidence="1">
    <location>
        <position position="122"/>
    </location>
</feature>
<feature type="active site" evidence="1">
    <location>
        <position position="262"/>
    </location>
</feature>
<feature type="active site" description="Proton donor" evidence="2">
    <location>
        <position position="355"/>
    </location>
</feature>
<feature type="active site" evidence="1">
    <location>
        <position position="376"/>
    </location>
</feature>
<feature type="binding site" evidence="3">
    <location>
        <position position="466"/>
    </location>
    <ligand>
        <name>Ca(2+)</name>
        <dbReference type="ChEBI" id="CHEBI:29108"/>
    </ligand>
</feature>
<feature type="glycosylation site" description="N-linked (GlcNAc...) asparagine" evidence="5">
    <location>
        <position position="115"/>
    </location>
</feature>
<feature type="glycosylation site" description="N-linked (GlcNAc...) asparagine" evidence="5">
    <location>
        <position position="494"/>
    </location>
</feature>
<feature type="mutagenesis site" description="Loss of activity." evidence="7">
    <original>E</original>
    <variation>Q</variation>
    <location>
        <position position="376"/>
    </location>
</feature>
<protein>
    <recommendedName>
        <fullName>Alpha-mannosidase I MNS4</fullName>
        <ecNumber evidence="7">3.2.1.-</ecNumber>
    </recommendedName>
</protein>
<evidence type="ECO:0000250" key="1"/>
<evidence type="ECO:0000250" key="2">
    <source>
        <dbReference type="UniProtKB" id="P31723"/>
    </source>
</evidence>
<evidence type="ECO:0000250" key="3">
    <source>
        <dbReference type="UniProtKB" id="P32906"/>
    </source>
</evidence>
<evidence type="ECO:0000250" key="4">
    <source>
        <dbReference type="UniProtKB" id="P45700"/>
    </source>
</evidence>
<evidence type="ECO:0000255" key="5"/>
<evidence type="ECO:0000256" key="6">
    <source>
        <dbReference type="SAM" id="MobiDB-lite"/>
    </source>
</evidence>
<evidence type="ECO:0000269" key="7">
    <source>
    </source>
</evidence>
<evidence type="ECO:0000305" key="8"/>
<proteinExistence type="evidence at protein level"/>
<organism>
    <name type="scientific">Arabidopsis thaliana</name>
    <name type="common">Mouse-ear cress</name>
    <dbReference type="NCBI Taxonomy" id="3702"/>
    <lineage>
        <taxon>Eukaryota</taxon>
        <taxon>Viridiplantae</taxon>
        <taxon>Streptophyta</taxon>
        <taxon>Embryophyta</taxon>
        <taxon>Tracheophyta</taxon>
        <taxon>Spermatophyta</taxon>
        <taxon>Magnoliopsida</taxon>
        <taxon>eudicotyledons</taxon>
        <taxon>Gunneridae</taxon>
        <taxon>Pentapetalae</taxon>
        <taxon>rosids</taxon>
        <taxon>malvids</taxon>
        <taxon>Brassicales</taxon>
        <taxon>Brassicaceae</taxon>
        <taxon>Camelineae</taxon>
        <taxon>Arabidopsis</taxon>
    </lineage>
</organism>
<accession>Q9FG93</accession>
<reference key="1">
    <citation type="submission" date="1999-04" db="EMBL/GenBank/DDBJ databases">
        <title>Structural analysis of Arabidopsis thaliana chromosome 5. XI.</title>
        <authorList>
            <person name="Kaneko T."/>
            <person name="Katoh T."/>
            <person name="Asamizu E."/>
            <person name="Sato S."/>
            <person name="Nakamura Y."/>
            <person name="Kotani H."/>
            <person name="Tabata S."/>
        </authorList>
    </citation>
    <scope>NUCLEOTIDE SEQUENCE [LARGE SCALE GENOMIC DNA]</scope>
    <source>
        <strain>cv. Columbia</strain>
    </source>
</reference>
<reference key="2">
    <citation type="journal article" date="2017" name="Plant J.">
        <title>Araport11: a complete reannotation of the Arabidopsis thaliana reference genome.</title>
        <authorList>
            <person name="Cheng C.Y."/>
            <person name="Krishnakumar V."/>
            <person name="Chan A.P."/>
            <person name="Thibaud-Nissen F."/>
            <person name="Schobel S."/>
            <person name="Town C.D."/>
        </authorList>
    </citation>
    <scope>GENOME REANNOTATION</scope>
    <source>
        <strain>cv. Columbia</strain>
    </source>
</reference>
<reference key="3">
    <citation type="journal article" date="2003" name="Science">
        <title>Empirical analysis of transcriptional activity in the Arabidopsis genome.</title>
        <authorList>
            <person name="Yamada K."/>
            <person name="Lim J."/>
            <person name="Dale J.M."/>
            <person name="Chen H."/>
            <person name="Shinn P."/>
            <person name="Palm C.J."/>
            <person name="Southwick A.M."/>
            <person name="Wu H.C."/>
            <person name="Kim C.J."/>
            <person name="Nguyen M."/>
            <person name="Pham P.K."/>
            <person name="Cheuk R.F."/>
            <person name="Karlin-Newmann G."/>
            <person name="Liu S.X."/>
            <person name="Lam B."/>
            <person name="Sakano H."/>
            <person name="Wu T."/>
            <person name="Yu G."/>
            <person name="Miranda M."/>
            <person name="Quach H.L."/>
            <person name="Tripp M."/>
            <person name="Chang C.H."/>
            <person name="Lee J.M."/>
            <person name="Toriumi M.J."/>
            <person name="Chan M.M."/>
            <person name="Tang C.C."/>
            <person name="Onodera C.S."/>
            <person name="Deng J.M."/>
            <person name="Akiyama K."/>
            <person name="Ansari Y."/>
            <person name="Arakawa T."/>
            <person name="Banh J."/>
            <person name="Banno F."/>
            <person name="Bowser L."/>
            <person name="Brooks S.Y."/>
            <person name="Carninci P."/>
            <person name="Chao Q."/>
            <person name="Choy N."/>
            <person name="Enju A."/>
            <person name="Goldsmith A.D."/>
            <person name="Gurjal M."/>
            <person name="Hansen N.F."/>
            <person name="Hayashizaki Y."/>
            <person name="Johnson-Hopson C."/>
            <person name="Hsuan V.W."/>
            <person name="Iida K."/>
            <person name="Karnes M."/>
            <person name="Khan S."/>
            <person name="Koesema E."/>
            <person name="Ishida J."/>
            <person name="Jiang P.X."/>
            <person name="Jones T."/>
            <person name="Kawai J."/>
            <person name="Kamiya A."/>
            <person name="Meyers C."/>
            <person name="Nakajima M."/>
            <person name="Narusaka M."/>
            <person name="Seki M."/>
            <person name="Sakurai T."/>
            <person name="Satou M."/>
            <person name="Tamse R."/>
            <person name="Vaysberg M."/>
            <person name="Wallender E.K."/>
            <person name="Wong C."/>
            <person name="Yamamura Y."/>
            <person name="Yuan S."/>
            <person name="Shinozaki K."/>
            <person name="Davis R.W."/>
            <person name="Theologis A."/>
            <person name="Ecker J.R."/>
        </authorList>
    </citation>
    <scope>NUCLEOTIDE SEQUENCE [LARGE SCALE MRNA]</scope>
    <source>
        <strain>cv. Columbia</strain>
    </source>
</reference>
<reference key="4">
    <citation type="journal article" date="2009" name="Plant Cell">
        <title>Class I alpha-mannosidases are required for N-glycan processing and root development in Arabidopsis thaliana.</title>
        <authorList>
            <person name="Liebminger E."/>
            <person name="Huttner S."/>
            <person name="Vavra U."/>
            <person name="Fischl R."/>
            <person name="Schoberer J."/>
            <person name="Grass J."/>
            <person name="Blaukopf C."/>
            <person name="Seifert G.J."/>
            <person name="Altmann F."/>
            <person name="Mach L."/>
            <person name="Strasser R."/>
        </authorList>
    </citation>
    <scope>IDENTIFICATION</scope>
</reference>
<reference key="5">
    <citation type="journal article" date="2014" name="Plant Cell">
        <title>Arabidopsis class I alpha-mannosidases MNS4 and MNS5 are involved in endoplasmic reticulum-associated degradation of misfolded glycoproteins.</title>
        <authorList>
            <person name="Huettner S."/>
            <person name="Veit C."/>
            <person name="Vavra U."/>
            <person name="Schoberer J."/>
            <person name="Liebminger E."/>
            <person name="Maresch D."/>
            <person name="Grass J."/>
            <person name="Altmann F."/>
            <person name="Mach L."/>
            <person name="Strasser R."/>
        </authorList>
    </citation>
    <scope>FUNCTION</scope>
    <scope>SUBCELLULAR LOCATION</scope>
    <scope>MUTAGENESIS OF GLU-376</scope>
</reference>
<comment type="function">
    <text evidence="7">Can convert Man(9)GlcNAc(2) and Man(8)GlcNAc(2) into N-glycans with a terminal alpha-1,6-linked Man residue in the C-branch. Functions in the formation of unique N-glycan structures that are specifically recognized by components of the endoplasmic reticulum-associated degradation (ERAD) machinery, which leads to the degradation of misfolded glycoproteins. Most likely generates N-glycan signal on misfolded glycoproteins that is subsequently recognized by OS9. Required for ERAD of the heavily glycosylated and misfolded BRI1 variants BRI1-5 and BRI1-9. Does not seem to play role in N-glycan processing of correctly folded proteins destined for secretion.</text>
</comment>
<comment type="cofactor">
    <cofactor evidence="4">
        <name>Ca(2+)</name>
        <dbReference type="ChEBI" id="CHEBI:29108"/>
    </cofactor>
</comment>
<comment type="pathway">
    <text evidence="8">Protein modification; protein glycosylation.</text>
</comment>
<comment type="subcellular location">
    <subcellularLocation>
        <location evidence="7">Endoplasmic reticulum membrane</location>
        <topology evidence="8">Single-pass type II membrane protein</topology>
    </subcellularLocation>
</comment>
<comment type="similarity">
    <text evidence="8">Belongs to the glycosyl hydrolase 47 family.</text>
</comment>
<sequence length="624" mass="70096">MDSNFKWLLFAILISLTFSGFVLHHGVLAESVKPDEAKQLRDEVRGMFYHAFDGYMNNAFPLDELRPLSCQGEDTLGGYALTLIDSLDTLALLGDRERFTSSVEWIGKNLQFNINKTVSVFETTIRVLGGLLSAHLIASDYATGMRIPSYNNELLVLAENLARRMLPAFDTPTGIPFGSVNLMYGVDKHESKITSTAGGGTLSLEFGVLSRLTNDPVFEQVAKNAVRGLWARRSNLDLVGAHINVFTGEWTQKDAGIGTSIDSFYEYLLKAYILFGDEEYLYIFQEAYRSAMQYLHKDPWYVEVNMDSAAIVWPVFNSLQAFWPGLQVLAGDVDPAIRTHTAFFSVWKRYGFTPEGFNLATLSVQYGQKSYPLRPELIESTYWLYKATRDPRYLDAGRDFVASLQYGAKCPCGYCHITDVELHKQEDHMESFFLAETVKYLWLLFDLAVDSDNLVDNGPYKYIFSTEGHLLPITPQISLAREHCSYFGGYCPSNSTKLEQEVLGEDSSNDDHSNDYPYHESFPVTGLIKGLCPGLTHAQKYGFSYVLPEKTDREDVNQPKPVVTSSSIVLISDQTVEKRPQEEEGFTSQSEPIMTISGGSSNDQTGQELTLLESETDDQRSYSS</sequence>
<keyword id="KW-0256">Endoplasmic reticulum</keyword>
<keyword id="KW-0325">Glycoprotein</keyword>
<keyword id="KW-0378">Hydrolase</keyword>
<keyword id="KW-0472">Membrane</keyword>
<keyword id="KW-0479">Metal-binding</keyword>
<keyword id="KW-1185">Reference proteome</keyword>
<keyword id="KW-0735">Signal-anchor</keyword>
<keyword id="KW-0812">Transmembrane</keyword>
<keyword id="KW-1133">Transmembrane helix</keyword>
<name>MNS4_ARATH</name>
<dbReference type="EC" id="3.2.1.-" evidence="7"/>
<dbReference type="EMBL" id="AB026651">
    <property type="protein sequence ID" value="BAB11298.1"/>
    <property type="molecule type" value="Genomic_DNA"/>
</dbReference>
<dbReference type="EMBL" id="CP002688">
    <property type="protein sequence ID" value="AED94999.1"/>
    <property type="molecule type" value="Genomic_DNA"/>
</dbReference>
<dbReference type="EMBL" id="AF370128">
    <property type="protein sequence ID" value="AAK43943.1"/>
    <property type="molecule type" value="mRNA"/>
</dbReference>
<dbReference type="EMBL" id="AY040044">
    <property type="protein sequence ID" value="AAK64102.1"/>
    <property type="molecule type" value="mRNA"/>
</dbReference>
<dbReference type="RefSeq" id="NP_199184.1">
    <property type="nucleotide sequence ID" value="NM_123737.3"/>
</dbReference>
<dbReference type="SMR" id="Q9FG93"/>
<dbReference type="FunCoup" id="Q9FG93">
    <property type="interactions" value="4178"/>
</dbReference>
<dbReference type="STRING" id="3702.Q9FG93"/>
<dbReference type="CAZy" id="GH47">
    <property type="family name" value="Glycoside Hydrolase Family 47"/>
</dbReference>
<dbReference type="TCDB" id="3.A.16.1.5">
    <property type="family name" value="the endoplasmic reticular retrotranslocon (er-rt) family"/>
</dbReference>
<dbReference type="GlyCosmos" id="Q9FG93">
    <property type="glycosylation" value="2 sites, No reported glycans"/>
</dbReference>
<dbReference type="GlyGen" id="Q9FG93">
    <property type="glycosylation" value="2 sites"/>
</dbReference>
<dbReference type="PaxDb" id="3702-AT5G43710.1"/>
<dbReference type="ProteomicsDB" id="238295"/>
<dbReference type="EnsemblPlants" id="AT5G43710.1">
    <property type="protein sequence ID" value="AT5G43710.1"/>
    <property type="gene ID" value="AT5G43710"/>
</dbReference>
<dbReference type="GeneID" id="834391"/>
<dbReference type="Gramene" id="AT5G43710.1">
    <property type="protein sequence ID" value="AT5G43710.1"/>
    <property type="gene ID" value="AT5G43710"/>
</dbReference>
<dbReference type="KEGG" id="ath:AT5G43710"/>
<dbReference type="Araport" id="AT5G43710"/>
<dbReference type="TAIR" id="AT5G43710">
    <property type="gene designation" value="MNS4"/>
</dbReference>
<dbReference type="eggNOG" id="KOG2429">
    <property type="taxonomic scope" value="Eukaryota"/>
</dbReference>
<dbReference type="HOGENOM" id="CLU_003818_5_5_1"/>
<dbReference type="InParanoid" id="Q9FG93"/>
<dbReference type="PhylomeDB" id="Q9FG93"/>
<dbReference type="UniPathway" id="UPA00378"/>
<dbReference type="PRO" id="PR:Q9FG93"/>
<dbReference type="Proteomes" id="UP000006548">
    <property type="component" value="Chromosome 5"/>
</dbReference>
<dbReference type="ExpressionAtlas" id="Q9FG93">
    <property type="expression patterns" value="baseline and differential"/>
</dbReference>
<dbReference type="GO" id="GO:0005783">
    <property type="term" value="C:endoplasmic reticulum"/>
    <property type="evidence" value="ECO:0000314"/>
    <property type="project" value="TAIR"/>
</dbReference>
<dbReference type="GO" id="GO:0005789">
    <property type="term" value="C:endoplasmic reticulum membrane"/>
    <property type="evidence" value="ECO:0007669"/>
    <property type="project" value="UniProtKB-SubCell"/>
</dbReference>
<dbReference type="GO" id="GO:0044322">
    <property type="term" value="C:endoplasmic reticulum quality control compartment"/>
    <property type="evidence" value="ECO:0007669"/>
    <property type="project" value="GOC"/>
</dbReference>
<dbReference type="GO" id="GO:0004559">
    <property type="term" value="F:alpha-mannosidase activity"/>
    <property type="evidence" value="ECO:0000315"/>
    <property type="project" value="TAIR"/>
</dbReference>
<dbReference type="GO" id="GO:0005509">
    <property type="term" value="F:calcium ion binding"/>
    <property type="evidence" value="ECO:0007669"/>
    <property type="project" value="InterPro"/>
</dbReference>
<dbReference type="GO" id="GO:0004571">
    <property type="term" value="F:mannosyl-oligosaccharide 1,2-alpha-mannosidase activity"/>
    <property type="evidence" value="ECO:0007669"/>
    <property type="project" value="InterPro"/>
</dbReference>
<dbReference type="GO" id="GO:0005975">
    <property type="term" value="P:carbohydrate metabolic process"/>
    <property type="evidence" value="ECO:0007669"/>
    <property type="project" value="InterPro"/>
</dbReference>
<dbReference type="GO" id="GO:1904380">
    <property type="term" value="P:endoplasmic reticulum mannose trimming"/>
    <property type="evidence" value="ECO:0007669"/>
    <property type="project" value="InterPro"/>
</dbReference>
<dbReference type="GO" id="GO:0006486">
    <property type="term" value="P:protein glycosylation"/>
    <property type="evidence" value="ECO:0007669"/>
    <property type="project" value="UniProtKB-UniPathway"/>
</dbReference>
<dbReference type="FunFam" id="1.50.10.10:FF:000015">
    <property type="entry name" value="alpha-1,2-Mannosidase"/>
    <property type="match status" value="1"/>
</dbReference>
<dbReference type="Gene3D" id="1.50.10.10">
    <property type="match status" value="1"/>
</dbReference>
<dbReference type="InterPro" id="IPR012341">
    <property type="entry name" value="6hp_glycosidase-like_sf"/>
</dbReference>
<dbReference type="InterPro" id="IPR044674">
    <property type="entry name" value="EDEM1/2/3"/>
</dbReference>
<dbReference type="InterPro" id="IPR001382">
    <property type="entry name" value="Glyco_hydro_47"/>
</dbReference>
<dbReference type="InterPro" id="IPR036026">
    <property type="entry name" value="Seven-hairpin_glycosidases"/>
</dbReference>
<dbReference type="PANTHER" id="PTHR45679">
    <property type="entry name" value="ER DEGRADATION-ENHANCING ALPHA-MANNOSIDASE-LIKE PROTEIN 2"/>
    <property type="match status" value="1"/>
</dbReference>
<dbReference type="PANTHER" id="PTHR45679:SF6">
    <property type="entry name" value="ER DEGRADATION-ENHANCING ALPHA-MANNOSIDASE-LIKE PROTEIN 2"/>
    <property type="match status" value="1"/>
</dbReference>
<dbReference type="Pfam" id="PF01532">
    <property type="entry name" value="Glyco_hydro_47"/>
    <property type="match status" value="1"/>
</dbReference>
<dbReference type="PRINTS" id="PR00747">
    <property type="entry name" value="GLYHDRLASE47"/>
</dbReference>
<dbReference type="SUPFAM" id="SSF48225">
    <property type="entry name" value="Seven-hairpin glycosidases"/>
    <property type="match status" value="1"/>
</dbReference>